<comment type="function">
    <text evidence="1">Cell wall formation. Catalyzes the transfer of a GlcNAc subunit on undecaprenyl-pyrophosphoryl-MurNAc-pentapeptide (lipid intermediate I) to form undecaprenyl-pyrophosphoryl-MurNAc-(pentapeptide)GlcNAc (lipid intermediate II).</text>
</comment>
<comment type="catalytic activity">
    <reaction evidence="1">
        <text>di-trans,octa-cis-undecaprenyl diphospho-N-acetyl-alpha-D-muramoyl-L-alanyl-D-glutamyl-meso-2,6-diaminopimeloyl-D-alanyl-D-alanine + UDP-N-acetyl-alpha-D-glucosamine = di-trans,octa-cis-undecaprenyl diphospho-[N-acetyl-alpha-D-glucosaminyl-(1-&gt;4)]-N-acetyl-alpha-D-muramoyl-L-alanyl-D-glutamyl-meso-2,6-diaminopimeloyl-D-alanyl-D-alanine + UDP + H(+)</text>
        <dbReference type="Rhea" id="RHEA:31227"/>
        <dbReference type="ChEBI" id="CHEBI:15378"/>
        <dbReference type="ChEBI" id="CHEBI:57705"/>
        <dbReference type="ChEBI" id="CHEBI:58223"/>
        <dbReference type="ChEBI" id="CHEBI:61387"/>
        <dbReference type="ChEBI" id="CHEBI:61388"/>
        <dbReference type="EC" id="2.4.1.227"/>
    </reaction>
</comment>
<comment type="pathway">
    <text evidence="1">Cell wall biogenesis; peptidoglycan biosynthesis.</text>
</comment>
<comment type="subcellular location">
    <subcellularLocation>
        <location evidence="1">Cell inner membrane</location>
        <topology evidence="1">Peripheral membrane protein</topology>
        <orientation evidence="1">Cytoplasmic side</orientation>
    </subcellularLocation>
</comment>
<comment type="similarity">
    <text evidence="1">Belongs to the glycosyltransferase 28 family. MurG subfamily.</text>
</comment>
<name>MURG_RUEST</name>
<sequence length="365" mass="38068">MTQKLLLMAAGGTGGHMFPAQALAEAMLRKGWRVKLSTDPRGARYTGGFPHMTEITEVSSATFARGGLLAKAMVAPRIAAGVASMAMQMRRDRPDVVIGFGGYPSIPALGAATLLGLPRMIHEQNGVLGKVNQKFATRVAEVACGVWPTDLPAGAEGIHVGNPVRAAVLERQGAPYIPPGDYPMSLLVMGGSQGARILSDVVPGAIAALPETLRRHLRVSHQAREEDMARVAQFYADAGIDAEVQTFFADVPSRISEAQLVISRSGASSIADISVIGRPSILIPLATAAGDHQTANTRGLVEAGGAIRIPESALDTTSLAEQIAAVLTNAEGATQMAHAALSTGIPDATERLVARVEHLSEEAAP</sequence>
<proteinExistence type="inferred from homology"/>
<accession>Q1GIV1</accession>
<gene>
    <name evidence="1" type="primary">murG</name>
    <name type="ordered locus">TM1040_0682</name>
</gene>
<feature type="chain" id="PRO_0000315168" description="UDP-N-acetylglucosamine--N-acetylmuramyl-(pentapeptide) pyrophosphoryl-undecaprenol N-acetylglucosamine transferase">
    <location>
        <begin position="1"/>
        <end position="365"/>
    </location>
</feature>
<feature type="binding site" evidence="1">
    <location>
        <begin position="13"/>
        <end position="15"/>
    </location>
    <ligand>
        <name>UDP-N-acetyl-alpha-D-glucosamine</name>
        <dbReference type="ChEBI" id="CHEBI:57705"/>
    </ligand>
</feature>
<feature type="binding site" evidence="1">
    <location>
        <position position="125"/>
    </location>
    <ligand>
        <name>UDP-N-acetyl-alpha-D-glucosamine</name>
        <dbReference type="ChEBI" id="CHEBI:57705"/>
    </ligand>
</feature>
<feature type="binding site" evidence="1">
    <location>
        <position position="165"/>
    </location>
    <ligand>
        <name>UDP-N-acetyl-alpha-D-glucosamine</name>
        <dbReference type="ChEBI" id="CHEBI:57705"/>
    </ligand>
</feature>
<feature type="binding site" evidence="1">
    <location>
        <position position="192"/>
    </location>
    <ligand>
        <name>UDP-N-acetyl-alpha-D-glucosamine</name>
        <dbReference type="ChEBI" id="CHEBI:57705"/>
    </ligand>
</feature>
<feature type="binding site" evidence="1">
    <location>
        <position position="293"/>
    </location>
    <ligand>
        <name>UDP-N-acetyl-alpha-D-glucosamine</name>
        <dbReference type="ChEBI" id="CHEBI:57705"/>
    </ligand>
</feature>
<reference key="1">
    <citation type="submission" date="2006-05" db="EMBL/GenBank/DDBJ databases">
        <title>Complete sequence of chromosome of Silicibacter sp. TM1040.</title>
        <authorList>
            <consortium name="US DOE Joint Genome Institute"/>
            <person name="Copeland A."/>
            <person name="Lucas S."/>
            <person name="Lapidus A."/>
            <person name="Barry K."/>
            <person name="Detter J.C."/>
            <person name="Glavina del Rio T."/>
            <person name="Hammon N."/>
            <person name="Israni S."/>
            <person name="Dalin E."/>
            <person name="Tice H."/>
            <person name="Pitluck S."/>
            <person name="Brettin T."/>
            <person name="Bruce D."/>
            <person name="Han C."/>
            <person name="Tapia R."/>
            <person name="Goodwin L."/>
            <person name="Thompson L.S."/>
            <person name="Gilna P."/>
            <person name="Schmutz J."/>
            <person name="Larimer F."/>
            <person name="Land M."/>
            <person name="Hauser L."/>
            <person name="Kyrpides N."/>
            <person name="Kim E."/>
            <person name="Belas R."/>
            <person name="Moran M.A."/>
            <person name="Buchan A."/>
            <person name="Gonzalez J.M."/>
            <person name="Schell M.A."/>
            <person name="Sun F."/>
            <person name="Richardson P."/>
        </authorList>
    </citation>
    <scope>NUCLEOTIDE SEQUENCE [LARGE SCALE GENOMIC DNA]</scope>
    <source>
        <strain>TM1040</strain>
    </source>
</reference>
<organism>
    <name type="scientific">Ruegeria sp. (strain TM1040)</name>
    <name type="common">Silicibacter sp.</name>
    <dbReference type="NCBI Taxonomy" id="292414"/>
    <lineage>
        <taxon>Bacteria</taxon>
        <taxon>Pseudomonadati</taxon>
        <taxon>Pseudomonadota</taxon>
        <taxon>Alphaproteobacteria</taxon>
        <taxon>Rhodobacterales</taxon>
        <taxon>Roseobacteraceae</taxon>
        <taxon>Ruegeria</taxon>
    </lineage>
</organism>
<dbReference type="EC" id="2.4.1.227" evidence="1"/>
<dbReference type="EMBL" id="CP000377">
    <property type="protein sequence ID" value="ABF63415.1"/>
    <property type="molecule type" value="Genomic_DNA"/>
</dbReference>
<dbReference type="RefSeq" id="WP_011538027.1">
    <property type="nucleotide sequence ID" value="NC_008044.1"/>
</dbReference>
<dbReference type="SMR" id="Q1GIV1"/>
<dbReference type="STRING" id="292414.TM1040_0682"/>
<dbReference type="CAZy" id="GT28">
    <property type="family name" value="Glycosyltransferase Family 28"/>
</dbReference>
<dbReference type="KEGG" id="sit:TM1040_0682"/>
<dbReference type="eggNOG" id="COG0707">
    <property type="taxonomic scope" value="Bacteria"/>
</dbReference>
<dbReference type="HOGENOM" id="CLU_037404_2_1_5"/>
<dbReference type="OrthoDB" id="9808936at2"/>
<dbReference type="UniPathway" id="UPA00219"/>
<dbReference type="Proteomes" id="UP000000636">
    <property type="component" value="Chromosome"/>
</dbReference>
<dbReference type="GO" id="GO:0005886">
    <property type="term" value="C:plasma membrane"/>
    <property type="evidence" value="ECO:0007669"/>
    <property type="project" value="UniProtKB-SubCell"/>
</dbReference>
<dbReference type="GO" id="GO:0051991">
    <property type="term" value="F:UDP-N-acetyl-D-glucosamine:N-acetylmuramoyl-L-alanyl-D-glutamyl-meso-2,6-diaminopimelyl-D-alanyl-D-alanine-diphosphoundecaprenol 4-beta-N-acetylglucosaminlytransferase activity"/>
    <property type="evidence" value="ECO:0007669"/>
    <property type="project" value="RHEA"/>
</dbReference>
<dbReference type="GO" id="GO:0050511">
    <property type="term" value="F:undecaprenyldiphospho-muramoylpentapeptide beta-N-acetylglucosaminyltransferase activity"/>
    <property type="evidence" value="ECO:0007669"/>
    <property type="project" value="UniProtKB-UniRule"/>
</dbReference>
<dbReference type="GO" id="GO:0005975">
    <property type="term" value="P:carbohydrate metabolic process"/>
    <property type="evidence" value="ECO:0007669"/>
    <property type="project" value="InterPro"/>
</dbReference>
<dbReference type="GO" id="GO:0051301">
    <property type="term" value="P:cell division"/>
    <property type="evidence" value="ECO:0007669"/>
    <property type="project" value="UniProtKB-KW"/>
</dbReference>
<dbReference type="GO" id="GO:0071555">
    <property type="term" value="P:cell wall organization"/>
    <property type="evidence" value="ECO:0007669"/>
    <property type="project" value="UniProtKB-KW"/>
</dbReference>
<dbReference type="GO" id="GO:0030259">
    <property type="term" value="P:lipid glycosylation"/>
    <property type="evidence" value="ECO:0007669"/>
    <property type="project" value="UniProtKB-UniRule"/>
</dbReference>
<dbReference type="GO" id="GO:0009252">
    <property type="term" value="P:peptidoglycan biosynthetic process"/>
    <property type="evidence" value="ECO:0007669"/>
    <property type="project" value="UniProtKB-UniRule"/>
</dbReference>
<dbReference type="GO" id="GO:0008360">
    <property type="term" value="P:regulation of cell shape"/>
    <property type="evidence" value="ECO:0007669"/>
    <property type="project" value="UniProtKB-KW"/>
</dbReference>
<dbReference type="CDD" id="cd03785">
    <property type="entry name" value="GT28_MurG"/>
    <property type="match status" value="1"/>
</dbReference>
<dbReference type="Gene3D" id="3.40.50.2000">
    <property type="entry name" value="Glycogen Phosphorylase B"/>
    <property type="match status" value="2"/>
</dbReference>
<dbReference type="HAMAP" id="MF_00033">
    <property type="entry name" value="MurG"/>
    <property type="match status" value="1"/>
</dbReference>
<dbReference type="InterPro" id="IPR006009">
    <property type="entry name" value="GlcNAc_MurG"/>
</dbReference>
<dbReference type="InterPro" id="IPR007235">
    <property type="entry name" value="Glyco_trans_28_C"/>
</dbReference>
<dbReference type="InterPro" id="IPR004276">
    <property type="entry name" value="GlycoTrans_28_N"/>
</dbReference>
<dbReference type="PANTHER" id="PTHR21015:SF22">
    <property type="entry name" value="GLYCOSYLTRANSFERASE"/>
    <property type="match status" value="1"/>
</dbReference>
<dbReference type="PANTHER" id="PTHR21015">
    <property type="entry name" value="UDP-N-ACETYLGLUCOSAMINE--N-ACETYLMURAMYL-(PENTAPEPTIDE) PYROPHOSPHORYL-UNDECAPRENOL N-ACETYLGLUCOSAMINE TRANSFERASE 1"/>
    <property type="match status" value="1"/>
</dbReference>
<dbReference type="Pfam" id="PF04101">
    <property type="entry name" value="Glyco_tran_28_C"/>
    <property type="match status" value="1"/>
</dbReference>
<dbReference type="Pfam" id="PF03033">
    <property type="entry name" value="Glyco_transf_28"/>
    <property type="match status" value="1"/>
</dbReference>
<dbReference type="SUPFAM" id="SSF53756">
    <property type="entry name" value="UDP-Glycosyltransferase/glycogen phosphorylase"/>
    <property type="match status" value="1"/>
</dbReference>
<keyword id="KW-0131">Cell cycle</keyword>
<keyword id="KW-0132">Cell division</keyword>
<keyword id="KW-0997">Cell inner membrane</keyword>
<keyword id="KW-1003">Cell membrane</keyword>
<keyword id="KW-0133">Cell shape</keyword>
<keyword id="KW-0961">Cell wall biogenesis/degradation</keyword>
<keyword id="KW-0328">Glycosyltransferase</keyword>
<keyword id="KW-0472">Membrane</keyword>
<keyword id="KW-0573">Peptidoglycan synthesis</keyword>
<keyword id="KW-1185">Reference proteome</keyword>
<keyword id="KW-0808">Transferase</keyword>
<evidence type="ECO:0000255" key="1">
    <source>
        <dbReference type="HAMAP-Rule" id="MF_00033"/>
    </source>
</evidence>
<protein>
    <recommendedName>
        <fullName evidence="1">UDP-N-acetylglucosamine--N-acetylmuramyl-(pentapeptide) pyrophosphoryl-undecaprenol N-acetylglucosamine transferase</fullName>
        <ecNumber evidence="1">2.4.1.227</ecNumber>
    </recommendedName>
    <alternativeName>
        <fullName evidence="1">Undecaprenyl-PP-MurNAc-pentapeptide-UDPGlcNAc GlcNAc transferase</fullName>
    </alternativeName>
</protein>